<evidence type="ECO:0000255" key="1">
    <source>
        <dbReference type="HAMAP-Rule" id="MF_00453"/>
    </source>
</evidence>
<protein>
    <recommendedName>
        <fullName evidence="1">Phosphoenolpyruvate carboxykinase (ATP)</fullName>
        <shortName evidence="1">PCK</shortName>
        <shortName evidence="1">PEP carboxykinase</shortName>
        <shortName evidence="1">PEPCK</shortName>
        <ecNumber evidence="1">4.1.1.49</ecNumber>
    </recommendedName>
</protein>
<name>PCKA_BRADU</name>
<reference key="1">
    <citation type="journal article" date="2002" name="DNA Res.">
        <title>Complete genomic sequence of nitrogen-fixing symbiotic bacterium Bradyrhizobium japonicum USDA110.</title>
        <authorList>
            <person name="Kaneko T."/>
            <person name="Nakamura Y."/>
            <person name="Sato S."/>
            <person name="Minamisawa K."/>
            <person name="Uchiumi T."/>
            <person name="Sasamoto S."/>
            <person name="Watanabe A."/>
            <person name="Idesawa K."/>
            <person name="Iriguchi M."/>
            <person name="Kawashima K."/>
            <person name="Kohara M."/>
            <person name="Matsumoto M."/>
            <person name="Shimpo S."/>
            <person name="Tsuruoka H."/>
            <person name="Wada T."/>
            <person name="Yamada M."/>
            <person name="Tabata S."/>
        </authorList>
    </citation>
    <scope>NUCLEOTIDE SEQUENCE [LARGE SCALE GENOMIC DNA]</scope>
    <source>
        <strain>JCM 10833 / BCRC 13528 / IAM 13628 / NBRC 14792 / USDA 110</strain>
    </source>
</reference>
<dbReference type="EC" id="4.1.1.49" evidence="1"/>
<dbReference type="EMBL" id="BA000040">
    <property type="protein sequence ID" value="BAC53406.1"/>
    <property type="molecule type" value="Genomic_DNA"/>
</dbReference>
<dbReference type="RefSeq" id="NP_774781.1">
    <property type="nucleotide sequence ID" value="NC_004463.1"/>
</dbReference>
<dbReference type="RefSeq" id="WP_011090863.1">
    <property type="nucleotide sequence ID" value="NC_004463.1"/>
</dbReference>
<dbReference type="SMR" id="Q89BK7"/>
<dbReference type="FunCoup" id="Q89BK7">
    <property type="interactions" value="461"/>
</dbReference>
<dbReference type="STRING" id="224911.AAV28_38400"/>
<dbReference type="EnsemblBacteria" id="BAC53406">
    <property type="protein sequence ID" value="BAC53406"/>
    <property type="gene ID" value="BAC53406"/>
</dbReference>
<dbReference type="GeneID" id="46495052"/>
<dbReference type="KEGG" id="bja:bll8141"/>
<dbReference type="PATRIC" id="fig|224911.44.peg.8312"/>
<dbReference type="eggNOG" id="COG1866">
    <property type="taxonomic scope" value="Bacteria"/>
</dbReference>
<dbReference type="HOGENOM" id="CLU_018247_0_1_5"/>
<dbReference type="InParanoid" id="Q89BK7"/>
<dbReference type="OrthoDB" id="9806325at2"/>
<dbReference type="PhylomeDB" id="Q89BK7"/>
<dbReference type="UniPathway" id="UPA00138"/>
<dbReference type="Proteomes" id="UP000002526">
    <property type="component" value="Chromosome"/>
</dbReference>
<dbReference type="GO" id="GO:0005829">
    <property type="term" value="C:cytosol"/>
    <property type="evidence" value="ECO:0000318"/>
    <property type="project" value="GO_Central"/>
</dbReference>
<dbReference type="GO" id="GO:0005524">
    <property type="term" value="F:ATP binding"/>
    <property type="evidence" value="ECO:0007669"/>
    <property type="project" value="UniProtKB-UniRule"/>
</dbReference>
<dbReference type="GO" id="GO:0046872">
    <property type="term" value="F:metal ion binding"/>
    <property type="evidence" value="ECO:0007669"/>
    <property type="project" value="UniProtKB-KW"/>
</dbReference>
<dbReference type="GO" id="GO:0004612">
    <property type="term" value="F:phosphoenolpyruvate carboxykinase (ATP) activity"/>
    <property type="evidence" value="ECO:0000318"/>
    <property type="project" value="GO_Central"/>
</dbReference>
<dbReference type="GO" id="GO:0006094">
    <property type="term" value="P:gluconeogenesis"/>
    <property type="evidence" value="ECO:0000318"/>
    <property type="project" value="GO_Central"/>
</dbReference>
<dbReference type="CDD" id="cd00484">
    <property type="entry name" value="PEPCK_ATP"/>
    <property type="match status" value="1"/>
</dbReference>
<dbReference type="FunFam" id="2.170.8.10:FF:000001">
    <property type="entry name" value="Phosphoenolpyruvate carboxykinase (ATP)"/>
    <property type="match status" value="1"/>
</dbReference>
<dbReference type="Gene3D" id="3.90.228.20">
    <property type="match status" value="1"/>
</dbReference>
<dbReference type="Gene3D" id="3.40.449.10">
    <property type="entry name" value="Phosphoenolpyruvate Carboxykinase, domain 1"/>
    <property type="match status" value="1"/>
</dbReference>
<dbReference type="Gene3D" id="2.170.8.10">
    <property type="entry name" value="Phosphoenolpyruvate Carboxykinase, domain 2"/>
    <property type="match status" value="1"/>
</dbReference>
<dbReference type="HAMAP" id="MF_00453">
    <property type="entry name" value="PEPCK_ATP"/>
    <property type="match status" value="1"/>
</dbReference>
<dbReference type="InterPro" id="IPR001272">
    <property type="entry name" value="PEP_carboxykinase_ATP"/>
</dbReference>
<dbReference type="InterPro" id="IPR013035">
    <property type="entry name" value="PEP_carboxykinase_C"/>
</dbReference>
<dbReference type="InterPro" id="IPR008210">
    <property type="entry name" value="PEP_carboxykinase_N"/>
</dbReference>
<dbReference type="InterPro" id="IPR015994">
    <property type="entry name" value="PEPCK_ATP_CS"/>
</dbReference>
<dbReference type="NCBIfam" id="TIGR00224">
    <property type="entry name" value="pckA"/>
    <property type="match status" value="1"/>
</dbReference>
<dbReference type="NCBIfam" id="NF006820">
    <property type="entry name" value="PRK09344.1-2"/>
    <property type="match status" value="1"/>
</dbReference>
<dbReference type="NCBIfam" id="NF006821">
    <property type="entry name" value="PRK09344.1-3"/>
    <property type="match status" value="1"/>
</dbReference>
<dbReference type="NCBIfam" id="NF006822">
    <property type="entry name" value="PRK09344.1-4"/>
    <property type="match status" value="1"/>
</dbReference>
<dbReference type="PANTHER" id="PTHR30031:SF0">
    <property type="entry name" value="PHOSPHOENOLPYRUVATE CARBOXYKINASE (ATP)"/>
    <property type="match status" value="1"/>
</dbReference>
<dbReference type="PANTHER" id="PTHR30031">
    <property type="entry name" value="PHOSPHOENOLPYRUVATE CARBOXYKINASE ATP"/>
    <property type="match status" value="1"/>
</dbReference>
<dbReference type="Pfam" id="PF01293">
    <property type="entry name" value="PEPCK_ATP"/>
    <property type="match status" value="1"/>
</dbReference>
<dbReference type="PIRSF" id="PIRSF006294">
    <property type="entry name" value="PEP_crbxkin"/>
    <property type="match status" value="1"/>
</dbReference>
<dbReference type="SUPFAM" id="SSF68923">
    <property type="entry name" value="PEP carboxykinase N-terminal domain"/>
    <property type="match status" value="1"/>
</dbReference>
<dbReference type="SUPFAM" id="SSF53795">
    <property type="entry name" value="PEP carboxykinase-like"/>
    <property type="match status" value="1"/>
</dbReference>
<dbReference type="PROSITE" id="PS00532">
    <property type="entry name" value="PEPCK_ATP"/>
    <property type="match status" value="1"/>
</dbReference>
<proteinExistence type="inferred from homology"/>
<sequence>MQETGVRNGAFGADKFGLKNLKQVHWNLGAPQLYQYSLSAGEAVLSADGALCADTGEFTGRSPKDKFTVRDATTDKKMWWAGNQSITAEQFETLYQDFLKHAEGKSLFAQDLYGGADPAYRIKTRVFTELAWHSLFIRTLLIRPEAIELSTFTPELTIIDMPSFRADPKRHGCKSENVVAIDFARKIVLIGGSYYAGEMKKSVFTTLNYYLPERGVMPMHCSANVGAKDDAAIFFGLSGTGKTTLSADPNRTLIGDDEHGWGPNGVFNFEGGCYAKCIKLSQEAEPQIYAASTRFGAVLENCVLDEDTRVVDFDDGSKTENTRSAYPLDFIPNASRTGRAPQPKNVVMLAADAFGVLPPIAKLSPAQAMYHFLSGYTAKVAGTERGLGNEPQPEFSTCFGSPFLPLDPSVYGNMLRDLIAQHNVDCWLVNTGWTGGKYGTGSRMPIKVTRALLTAALDGSLRNVEFRTDKYFGFAVPTALPGVPSEILNPVNTWKDKDEFDKTARALVGMFQKNFAKFEAQVDAEVRAAAPDVKLAAE</sequence>
<organism>
    <name type="scientific">Bradyrhizobium diazoefficiens (strain JCM 10833 / BCRC 13528 / IAM 13628 / NBRC 14792 / USDA 110)</name>
    <dbReference type="NCBI Taxonomy" id="224911"/>
    <lineage>
        <taxon>Bacteria</taxon>
        <taxon>Pseudomonadati</taxon>
        <taxon>Pseudomonadota</taxon>
        <taxon>Alphaproteobacteria</taxon>
        <taxon>Hyphomicrobiales</taxon>
        <taxon>Nitrobacteraceae</taxon>
        <taxon>Bradyrhizobium</taxon>
    </lineage>
</organism>
<keyword id="KW-0067">ATP-binding</keyword>
<keyword id="KW-0963">Cytoplasm</keyword>
<keyword id="KW-0210">Decarboxylase</keyword>
<keyword id="KW-0312">Gluconeogenesis</keyword>
<keyword id="KW-0456">Lyase</keyword>
<keyword id="KW-0464">Manganese</keyword>
<keyword id="KW-0479">Metal-binding</keyword>
<keyword id="KW-0547">Nucleotide-binding</keyword>
<keyword id="KW-1185">Reference proteome</keyword>
<accession>Q89BK7</accession>
<comment type="function">
    <text evidence="1">Involved in the gluconeogenesis. Catalyzes the conversion of oxaloacetate (OAA) to phosphoenolpyruvate (PEP) through direct phosphoryl transfer between the nucleoside triphosphate and OAA.</text>
</comment>
<comment type="catalytic activity">
    <reaction evidence="1">
        <text>oxaloacetate + ATP = phosphoenolpyruvate + ADP + CO2</text>
        <dbReference type="Rhea" id="RHEA:18617"/>
        <dbReference type="ChEBI" id="CHEBI:16452"/>
        <dbReference type="ChEBI" id="CHEBI:16526"/>
        <dbReference type="ChEBI" id="CHEBI:30616"/>
        <dbReference type="ChEBI" id="CHEBI:58702"/>
        <dbReference type="ChEBI" id="CHEBI:456216"/>
        <dbReference type="EC" id="4.1.1.49"/>
    </reaction>
</comment>
<comment type="cofactor">
    <cofactor evidence="1">
        <name>Mn(2+)</name>
        <dbReference type="ChEBI" id="CHEBI:29035"/>
    </cofactor>
    <text evidence="1">Binds 1 Mn(2+) ion per subunit.</text>
</comment>
<comment type="pathway">
    <text evidence="1">Carbohydrate biosynthesis; gluconeogenesis.</text>
</comment>
<comment type="subcellular location">
    <subcellularLocation>
        <location evidence="1">Cytoplasm</location>
    </subcellularLocation>
</comment>
<comment type="similarity">
    <text evidence="1">Belongs to the phosphoenolpyruvate carboxykinase (ATP) family.</text>
</comment>
<gene>
    <name evidence="1" type="primary">pckA</name>
    <name type="ordered locus">bll8141</name>
</gene>
<feature type="chain" id="PRO_0000203812" description="Phosphoenolpyruvate carboxykinase (ATP)">
    <location>
        <begin position="1"/>
        <end position="538"/>
    </location>
</feature>
<feature type="binding site" evidence="1">
    <location>
        <position position="61"/>
    </location>
    <ligand>
        <name>substrate</name>
    </ligand>
</feature>
<feature type="binding site" evidence="1">
    <location>
        <position position="195"/>
    </location>
    <ligand>
        <name>substrate</name>
    </ligand>
</feature>
<feature type="binding site" evidence="1">
    <location>
        <position position="201"/>
    </location>
    <ligand>
        <name>ATP</name>
        <dbReference type="ChEBI" id="CHEBI:30616"/>
    </ligand>
</feature>
<feature type="binding site" evidence="1">
    <location>
        <position position="201"/>
    </location>
    <ligand>
        <name>Mn(2+)</name>
        <dbReference type="ChEBI" id="CHEBI:29035"/>
    </ligand>
</feature>
<feature type="binding site" evidence="1">
    <location>
        <position position="201"/>
    </location>
    <ligand>
        <name>substrate</name>
    </ligand>
</feature>
<feature type="binding site" evidence="1">
    <location>
        <position position="220"/>
    </location>
    <ligand>
        <name>ATP</name>
        <dbReference type="ChEBI" id="CHEBI:30616"/>
    </ligand>
</feature>
<feature type="binding site" evidence="1">
    <location>
        <position position="220"/>
    </location>
    <ligand>
        <name>Mn(2+)</name>
        <dbReference type="ChEBI" id="CHEBI:29035"/>
    </ligand>
</feature>
<feature type="binding site" evidence="1">
    <location>
        <begin position="236"/>
        <end position="244"/>
    </location>
    <ligand>
        <name>ATP</name>
        <dbReference type="ChEBI" id="CHEBI:30616"/>
    </ligand>
</feature>
<feature type="binding site" evidence="1">
    <location>
        <position position="257"/>
    </location>
    <ligand>
        <name>Mn(2+)</name>
        <dbReference type="ChEBI" id="CHEBI:29035"/>
    </ligand>
</feature>
<feature type="binding site" evidence="1">
    <location>
        <position position="285"/>
    </location>
    <ligand>
        <name>ATP</name>
        <dbReference type="ChEBI" id="CHEBI:30616"/>
    </ligand>
</feature>
<feature type="binding site" evidence="1">
    <location>
        <position position="323"/>
    </location>
    <ligand>
        <name>ATP</name>
        <dbReference type="ChEBI" id="CHEBI:30616"/>
    </ligand>
</feature>
<feature type="binding site" evidence="1">
    <location>
        <position position="323"/>
    </location>
    <ligand>
        <name>substrate</name>
    </ligand>
</feature>
<feature type="binding site" evidence="1">
    <location>
        <position position="449"/>
    </location>
    <ligand>
        <name>ATP</name>
        <dbReference type="ChEBI" id="CHEBI:30616"/>
    </ligand>
</feature>